<reference key="1">
    <citation type="submission" date="2006-12" db="EMBL/GenBank/DDBJ databases">
        <title>Complete sequence of Shewanella amazonensis SB2B.</title>
        <authorList>
            <consortium name="US DOE Joint Genome Institute"/>
            <person name="Copeland A."/>
            <person name="Lucas S."/>
            <person name="Lapidus A."/>
            <person name="Barry K."/>
            <person name="Detter J.C."/>
            <person name="Glavina del Rio T."/>
            <person name="Hammon N."/>
            <person name="Israni S."/>
            <person name="Dalin E."/>
            <person name="Tice H."/>
            <person name="Pitluck S."/>
            <person name="Munk A.C."/>
            <person name="Brettin T."/>
            <person name="Bruce D."/>
            <person name="Han C."/>
            <person name="Tapia R."/>
            <person name="Gilna P."/>
            <person name="Schmutz J."/>
            <person name="Larimer F."/>
            <person name="Land M."/>
            <person name="Hauser L."/>
            <person name="Kyrpides N."/>
            <person name="Mikhailova N."/>
            <person name="Fredrickson J."/>
            <person name="Richardson P."/>
        </authorList>
    </citation>
    <scope>NUCLEOTIDE SEQUENCE [LARGE SCALE GENOMIC DNA]</scope>
    <source>
        <strain>ATCC BAA-1098 / SB2B</strain>
    </source>
</reference>
<feature type="chain" id="PRO_1000000915" description="Adenylosuccinate synthetase">
    <location>
        <begin position="1"/>
        <end position="431"/>
    </location>
</feature>
<feature type="active site" description="Proton acceptor" evidence="1">
    <location>
        <position position="14"/>
    </location>
</feature>
<feature type="active site" description="Proton donor" evidence="1">
    <location>
        <position position="42"/>
    </location>
</feature>
<feature type="binding site" evidence="1">
    <location>
        <begin position="13"/>
        <end position="19"/>
    </location>
    <ligand>
        <name>GTP</name>
        <dbReference type="ChEBI" id="CHEBI:37565"/>
    </ligand>
</feature>
<feature type="binding site" description="in other chain" evidence="1">
    <location>
        <begin position="14"/>
        <end position="17"/>
    </location>
    <ligand>
        <name>IMP</name>
        <dbReference type="ChEBI" id="CHEBI:58053"/>
        <note>ligand shared between dimeric partners</note>
    </ligand>
</feature>
<feature type="binding site" evidence="1">
    <location>
        <position position="14"/>
    </location>
    <ligand>
        <name>Mg(2+)</name>
        <dbReference type="ChEBI" id="CHEBI:18420"/>
    </ligand>
</feature>
<feature type="binding site" description="in other chain" evidence="1">
    <location>
        <begin position="39"/>
        <end position="42"/>
    </location>
    <ligand>
        <name>IMP</name>
        <dbReference type="ChEBI" id="CHEBI:58053"/>
        <note>ligand shared between dimeric partners</note>
    </ligand>
</feature>
<feature type="binding site" evidence="1">
    <location>
        <begin position="41"/>
        <end position="43"/>
    </location>
    <ligand>
        <name>GTP</name>
        <dbReference type="ChEBI" id="CHEBI:37565"/>
    </ligand>
</feature>
<feature type="binding site" evidence="1">
    <location>
        <position position="41"/>
    </location>
    <ligand>
        <name>Mg(2+)</name>
        <dbReference type="ChEBI" id="CHEBI:18420"/>
    </ligand>
</feature>
<feature type="binding site" description="in other chain" evidence="1">
    <location>
        <position position="130"/>
    </location>
    <ligand>
        <name>IMP</name>
        <dbReference type="ChEBI" id="CHEBI:58053"/>
        <note>ligand shared between dimeric partners</note>
    </ligand>
</feature>
<feature type="binding site" evidence="1">
    <location>
        <position position="144"/>
    </location>
    <ligand>
        <name>IMP</name>
        <dbReference type="ChEBI" id="CHEBI:58053"/>
        <note>ligand shared between dimeric partners</note>
    </ligand>
</feature>
<feature type="binding site" description="in other chain" evidence="1">
    <location>
        <position position="225"/>
    </location>
    <ligand>
        <name>IMP</name>
        <dbReference type="ChEBI" id="CHEBI:58053"/>
        <note>ligand shared between dimeric partners</note>
    </ligand>
</feature>
<feature type="binding site" description="in other chain" evidence="1">
    <location>
        <position position="240"/>
    </location>
    <ligand>
        <name>IMP</name>
        <dbReference type="ChEBI" id="CHEBI:58053"/>
        <note>ligand shared between dimeric partners</note>
    </ligand>
</feature>
<feature type="binding site" evidence="1">
    <location>
        <begin position="300"/>
        <end position="306"/>
    </location>
    <ligand>
        <name>substrate</name>
    </ligand>
</feature>
<feature type="binding site" description="in other chain" evidence="1">
    <location>
        <position position="304"/>
    </location>
    <ligand>
        <name>IMP</name>
        <dbReference type="ChEBI" id="CHEBI:58053"/>
        <note>ligand shared between dimeric partners</note>
    </ligand>
</feature>
<feature type="binding site" evidence="1">
    <location>
        <position position="306"/>
    </location>
    <ligand>
        <name>GTP</name>
        <dbReference type="ChEBI" id="CHEBI:37565"/>
    </ligand>
</feature>
<feature type="binding site" evidence="1">
    <location>
        <begin position="332"/>
        <end position="334"/>
    </location>
    <ligand>
        <name>GTP</name>
        <dbReference type="ChEBI" id="CHEBI:37565"/>
    </ligand>
</feature>
<feature type="binding site" evidence="1">
    <location>
        <begin position="415"/>
        <end position="417"/>
    </location>
    <ligand>
        <name>GTP</name>
        <dbReference type="ChEBI" id="CHEBI:37565"/>
    </ligand>
</feature>
<dbReference type="EC" id="6.3.4.4" evidence="1"/>
<dbReference type="EMBL" id="CP000507">
    <property type="protein sequence ID" value="ABM01272.1"/>
    <property type="molecule type" value="Genomic_DNA"/>
</dbReference>
<dbReference type="RefSeq" id="WP_011761176.1">
    <property type="nucleotide sequence ID" value="NC_008700.1"/>
</dbReference>
<dbReference type="SMR" id="A1SA65"/>
<dbReference type="STRING" id="326297.Sama_3069"/>
<dbReference type="KEGG" id="saz:Sama_3069"/>
<dbReference type="eggNOG" id="COG0104">
    <property type="taxonomic scope" value="Bacteria"/>
</dbReference>
<dbReference type="HOGENOM" id="CLU_029848_0_0_6"/>
<dbReference type="OrthoDB" id="9807553at2"/>
<dbReference type="UniPathway" id="UPA00075">
    <property type="reaction ID" value="UER00335"/>
</dbReference>
<dbReference type="Proteomes" id="UP000009175">
    <property type="component" value="Chromosome"/>
</dbReference>
<dbReference type="GO" id="GO:0005737">
    <property type="term" value="C:cytoplasm"/>
    <property type="evidence" value="ECO:0007669"/>
    <property type="project" value="UniProtKB-SubCell"/>
</dbReference>
<dbReference type="GO" id="GO:0004019">
    <property type="term" value="F:adenylosuccinate synthase activity"/>
    <property type="evidence" value="ECO:0007669"/>
    <property type="project" value="UniProtKB-UniRule"/>
</dbReference>
<dbReference type="GO" id="GO:0005525">
    <property type="term" value="F:GTP binding"/>
    <property type="evidence" value="ECO:0007669"/>
    <property type="project" value="UniProtKB-UniRule"/>
</dbReference>
<dbReference type="GO" id="GO:0000287">
    <property type="term" value="F:magnesium ion binding"/>
    <property type="evidence" value="ECO:0007669"/>
    <property type="project" value="UniProtKB-UniRule"/>
</dbReference>
<dbReference type="GO" id="GO:0044208">
    <property type="term" value="P:'de novo' AMP biosynthetic process"/>
    <property type="evidence" value="ECO:0007669"/>
    <property type="project" value="UniProtKB-UniRule"/>
</dbReference>
<dbReference type="GO" id="GO:0046040">
    <property type="term" value="P:IMP metabolic process"/>
    <property type="evidence" value="ECO:0007669"/>
    <property type="project" value="TreeGrafter"/>
</dbReference>
<dbReference type="CDD" id="cd03108">
    <property type="entry name" value="AdSS"/>
    <property type="match status" value="1"/>
</dbReference>
<dbReference type="FunFam" id="1.10.300.10:FF:000001">
    <property type="entry name" value="Adenylosuccinate synthetase"/>
    <property type="match status" value="1"/>
</dbReference>
<dbReference type="FunFam" id="3.90.170.10:FF:000001">
    <property type="entry name" value="Adenylosuccinate synthetase"/>
    <property type="match status" value="1"/>
</dbReference>
<dbReference type="Gene3D" id="3.40.440.10">
    <property type="entry name" value="Adenylosuccinate Synthetase, subunit A, domain 1"/>
    <property type="match status" value="1"/>
</dbReference>
<dbReference type="Gene3D" id="1.10.300.10">
    <property type="entry name" value="Adenylosuccinate Synthetase, subunit A, domain 2"/>
    <property type="match status" value="1"/>
</dbReference>
<dbReference type="Gene3D" id="3.90.170.10">
    <property type="entry name" value="Adenylosuccinate Synthetase, subunit A, domain 3"/>
    <property type="match status" value="1"/>
</dbReference>
<dbReference type="HAMAP" id="MF_00011">
    <property type="entry name" value="Adenylosucc_synth"/>
    <property type="match status" value="1"/>
</dbReference>
<dbReference type="InterPro" id="IPR018220">
    <property type="entry name" value="Adenylosuccin_syn_GTP-bd"/>
</dbReference>
<dbReference type="InterPro" id="IPR033128">
    <property type="entry name" value="Adenylosuccin_syn_Lys_AS"/>
</dbReference>
<dbReference type="InterPro" id="IPR042109">
    <property type="entry name" value="Adenylosuccinate_synth_dom1"/>
</dbReference>
<dbReference type="InterPro" id="IPR042110">
    <property type="entry name" value="Adenylosuccinate_synth_dom2"/>
</dbReference>
<dbReference type="InterPro" id="IPR042111">
    <property type="entry name" value="Adenylosuccinate_synth_dom3"/>
</dbReference>
<dbReference type="InterPro" id="IPR001114">
    <property type="entry name" value="Adenylosuccinate_synthetase"/>
</dbReference>
<dbReference type="InterPro" id="IPR027417">
    <property type="entry name" value="P-loop_NTPase"/>
</dbReference>
<dbReference type="NCBIfam" id="NF002223">
    <property type="entry name" value="PRK01117.1"/>
    <property type="match status" value="1"/>
</dbReference>
<dbReference type="NCBIfam" id="TIGR00184">
    <property type="entry name" value="purA"/>
    <property type="match status" value="1"/>
</dbReference>
<dbReference type="PANTHER" id="PTHR11846">
    <property type="entry name" value="ADENYLOSUCCINATE SYNTHETASE"/>
    <property type="match status" value="1"/>
</dbReference>
<dbReference type="PANTHER" id="PTHR11846:SF0">
    <property type="entry name" value="ADENYLOSUCCINATE SYNTHETASE"/>
    <property type="match status" value="1"/>
</dbReference>
<dbReference type="Pfam" id="PF00709">
    <property type="entry name" value="Adenylsucc_synt"/>
    <property type="match status" value="1"/>
</dbReference>
<dbReference type="SMART" id="SM00788">
    <property type="entry name" value="Adenylsucc_synt"/>
    <property type="match status" value="1"/>
</dbReference>
<dbReference type="SUPFAM" id="SSF52540">
    <property type="entry name" value="P-loop containing nucleoside triphosphate hydrolases"/>
    <property type="match status" value="1"/>
</dbReference>
<dbReference type="PROSITE" id="PS01266">
    <property type="entry name" value="ADENYLOSUCCIN_SYN_1"/>
    <property type="match status" value="1"/>
</dbReference>
<dbReference type="PROSITE" id="PS00513">
    <property type="entry name" value="ADENYLOSUCCIN_SYN_2"/>
    <property type="match status" value="1"/>
</dbReference>
<sequence length="431" mass="46817">MGKNVVVLGTQWGDEGKGKIVDLLTEQAKYVVRYQGGHNAGHTLVIDGVKTVLHLIPSGILRDNVKCIIGNGVVLAPDALMKEISMLKERGVPVEDRLLISEACPLILPFHCAVDIAREKARGNKAIGTTGRGIGPAYEDKVSRRGLRVGDLFNAELFAEKLKEVMKYHNFMLTEYYGAEAVDYQTTLDDALAMADYLKSMCVDVTEMLDQARKAGENILFEGAQGTLLDIDHGTYPFVTSSNTTAGGVATGSGFGPCHLDYVLGIMKAYTTRVGAGPFPTELECEIGDHLGTKGHEFGATTGRKRRPGWLDAVAMKRAIQINSLTGICLTKLDVLDGLEEVKICVGYQQPDGTVTTVTPLAAEGYELVTPVYETLPGWSENTFGVTSMDQLPQAAVNYIKRIEEILETPIDIISTGPDRNETFIRVSPFN</sequence>
<keyword id="KW-0963">Cytoplasm</keyword>
<keyword id="KW-0342">GTP-binding</keyword>
<keyword id="KW-0436">Ligase</keyword>
<keyword id="KW-0460">Magnesium</keyword>
<keyword id="KW-0479">Metal-binding</keyword>
<keyword id="KW-0547">Nucleotide-binding</keyword>
<keyword id="KW-0658">Purine biosynthesis</keyword>
<keyword id="KW-1185">Reference proteome</keyword>
<accession>A1SA65</accession>
<proteinExistence type="inferred from homology"/>
<evidence type="ECO:0000255" key="1">
    <source>
        <dbReference type="HAMAP-Rule" id="MF_00011"/>
    </source>
</evidence>
<name>PURA_SHEAM</name>
<organism>
    <name type="scientific">Shewanella amazonensis (strain ATCC BAA-1098 / SB2B)</name>
    <dbReference type="NCBI Taxonomy" id="326297"/>
    <lineage>
        <taxon>Bacteria</taxon>
        <taxon>Pseudomonadati</taxon>
        <taxon>Pseudomonadota</taxon>
        <taxon>Gammaproteobacteria</taxon>
        <taxon>Alteromonadales</taxon>
        <taxon>Shewanellaceae</taxon>
        <taxon>Shewanella</taxon>
    </lineage>
</organism>
<comment type="function">
    <text evidence="1">Plays an important role in the de novo pathway of purine nucleotide biosynthesis. Catalyzes the first committed step in the biosynthesis of AMP from IMP.</text>
</comment>
<comment type="catalytic activity">
    <reaction evidence="1">
        <text>IMP + L-aspartate + GTP = N(6)-(1,2-dicarboxyethyl)-AMP + GDP + phosphate + 2 H(+)</text>
        <dbReference type="Rhea" id="RHEA:15753"/>
        <dbReference type="ChEBI" id="CHEBI:15378"/>
        <dbReference type="ChEBI" id="CHEBI:29991"/>
        <dbReference type="ChEBI" id="CHEBI:37565"/>
        <dbReference type="ChEBI" id="CHEBI:43474"/>
        <dbReference type="ChEBI" id="CHEBI:57567"/>
        <dbReference type="ChEBI" id="CHEBI:58053"/>
        <dbReference type="ChEBI" id="CHEBI:58189"/>
        <dbReference type="EC" id="6.3.4.4"/>
    </reaction>
</comment>
<comment type="cofactor">
    <cofactor evidence="1">
        <name>Mg(2+)</name>
        <dbReference type="ChEBI" id="CHEBI:18420"/>
    </cofactor>
    <text evidence="1">Binds 1 Mg(2+) ion per subunit.</text>
</comment>
<comment type="pathway">
    <text evidence="1">Purine metabolism; AMP biosynthesis via de novo pathway; AMP from IMP: step 1/2.</text>
</comment>
<comment type="subunit">
    <text evidence="1">Homodimer.</text>
</comment>
<comment type="subcellular location">
    <subcellularLocation>
        <location evidence="1">Cytoplasm</location>
    </subcellularLocation>
</comment>
<comment type="similarity">
    <text evidence="1">Belongs to the adenylosuccinate synthetase family.</text>
</comment>
<protein>
    <recommendedName>
        <fullName evidence="1">Adenylosuccinate synthetase</fullName>
        <shortName evidence="1">AMPSase</shortName>
        <shortName evidence="1">AdSS</shortName>
        <ecNumber evidence="1">6.3.4.4</ecNumber>
    </recommendedName>
    <alternativeName>
        <fullName evidence="1">IMP--aspartate ligase</fullName>
    </alternativeName>
</protein>
<gene>
    <name evidence="1" type="primary">purA</name>
    <name type="ordered locus">Sama_3069</name>
</gene>